<accession>Q732J9</accession>
<comment type="similarity">
    <text evidence="1">Belongs to the RemA family.</text>
</comment>
<sequence length="87" mass="9647">MAMRFLNIGYGNIVSAHRIIAIVSPESAPIKRTVQEAREHNALLDATYGRKTRAVIVMDDGHVVLSPIQPETIAHRLNNKEDLSEEG</sequence>
<proteinExistence type="inferred from homology"/>
<dbReference type="EMBL" id="AE017194">
    <property type="protein sequence ID" value="AAS42818.1"/>
    <property type="molecule type" value="Genomic_DNA"/>
</dbReference>
<dbReference type="SMR" id="Q732J9"/>
<dbReference type="KEGG" id="bca:BCE_3915"/>
<dbReference type="HOGENOM" id="CLU_165326_0_0_9"/>
<dbReference type="Proteomes" id="UP000002527">
    <property type="component" value="Chromosome"/>
</dbReference>
<dbReference type="HAMAP" id="MF_01503">
    <property type="entry name" value="RemA"/>
    <property type="match status" value="1"/>
</dbReference>
<dbReference type="InterPro" id="IPR007169">
    <property type="entry name" value="RemA-like"/>
</dbReference>
<dbReference type="NCBIfam" id="NF046064">
    <property type="entry name" value="MtxBflmRegRemA"/>
    <property type="match status" value="1"/>
</dbReference>
<dbReference type="NCBIfam" id="NF003315">
    <property type="entry name" value="PRK04323.1"/>
    <property type="match status" value="1"/>
</dbReference>
<dbReference type="PANTHER" id="PTHR38449:SF1">
    <property type="entry name" value="REGULATORY PROTEIN SSL2874-RELATED"/>
    <property type="match status" value="1"/>
</dbReference>
<dbReference type="PANTHER" id="PTHR38449">
    <property type="entry name" value="REGULATORY PROTEIN TM_1690-RELATED"/>
    <property type="match status" value="1"/>
</dbReference>
<dbReference type="Pfam" id="PF04025">
    <property type="entry name" value="RemA-like"/>
    <property type="match status" value="1"/>
</dbReference>
<name>Y3915_BACC1</name>
<protein>
    <recommendedName>
        <fullName evidence="1">Putative regulatory protein BCE_3915</fullName>
    </recommendedName>
</protein>
<reference key="1">
    <citation type="journal article" date="2004" name="Nucleic Acids Res.">
        <title>The genome sequence of Bacillus cereus ATCC 10987 reveals metabolic adaptations and a large plasmid related to Bacillus anthracis pXO1.</title>
        <authorList>
            <person name="Rasko D.A."/>
            <person name="Ravel J."/>
            <person name="Oekstad O.A."/>
            <person name="Helgason E."/>
            <person name="Cer R.Z."/>
            <person name="Jiang L."/>
            <person name="Shores K.A."/>
            <person name="Fouts D.E."/>
            <person name="Tourasse N.J."/>
            <person name="Angiuoli S.V."/>
            <person name="Kolonay J.F."/>
            <person name="Nelson W.C."/>
            <person name="Kolstoe A.-B."/>
            <person name="Fraser C.M."/>
            <person name="Read T.D."/>
        </authorList>
    </citation>
    <scope>NUCLEOTIDE SEQUENCE [LARGE SCALE GENOMIC DNA]</scope>
    <source>
        <strain>ATCC 10987 / NRS 248</strain>
    </source>
</reference>
<gene>
    <name type="ordered locus">BCE_3915</name>
</gene>
<organism>
    <name type="scientific">Bacillus cereus (strain ATCC 10987 / NRS 248)</name>
    <dbReference type="NCBI Taxonomy" id="222523"/>
    <lineage>
        <taxon>Bacteria</taxon>
        <taxon>Bacillati</taxon>
        <taxon>Bacillota</taxon>
        <taxon>Bacilli</taxon>
        <taxon>Bacillales</taxon>
        <taxon>Bacillaceae</taxon>
        <taxon>Bacillus</taxon>
        <taxon>Bacillus cereus group</taxon>
    </lineage>
</organism>
<feature type="chain" id="PRO_0000050217" description="Putative regulatory protein BCE_3915">
    <location>
        <begin position="1"/>
        <end position="87"/>
    </location>
</feature>
<evidence type="ECO:0000255" key="1">
    <source>
        <dbReference type="HAMAP-Rule" id="MF_01503"/>
    </source>
</evidence>